<name>RS271_ARATH</name>
<accession>O64650</accession>
<dbReference type="EMBL" id="AC003680">
    <property type="protein sequence ID" value="AAM14895.1"/>
    <property type="molecule type" value="Genomic_DNA"/>
</dbReference>
<dbReference type="EMBL" id="AC004665">
    <property type="protein sequence ID" value="AAC28554.1"/>
    <property type="molecule type" value="Genomic_DNA"/>
</dbReference>
<dbReference type="EMBL" id="CP002685">
    <property type="protein sequence ID" value="AEC10590.1"/>
    <property type="molecule type" value="Genomic_DNA"/>
</dbReference>
<dbReference type="EMBL" id="AY072376">
    <property type="protein sequence ID" value="AAL62368.1"/>
    <property type="molecule type" value="mRNA"/>
</dbReference>
<dbReference type="EMBL" id="BT000089">
    <property type="protein sequence ID" value="AAN15408.1"/>
    <property type="molecule type" value="mRNA"/>
</dbReference>
<dbReference type="EMBL" id="AY085824">
    <property type="protein sequence ID" value="AAM63040.1"/>
    <property type="molecule type" value="mRNA"/>
</dbReference>
<dbReference type="PIR" id="T00884">
    <property type="entry name" value="T02476"/>
</dbReference>
<dbReference type="RefSeq" id="NP_182095.1">
    <property type="nucleotide sequence ID" value="NM_130134.4"/>
</dbReference>
<dbReference type="SMR" id="O64650"/>
<dbReference type="BioGRID" id="4515">
    <property type="interactions" value="9"/>
</dbReference>
<dbReference type="FunCoup" id="O64650">
    <property type="interactions" value="2732"/>
</dbReference>
<dbReference type="STRING" id="3702.O64650"/>
<dbReference type="iPTMnet" id="O64650"/>
<dbReference type="PaxDb" id="3702-AT2G45710.1"/>
<dbReference type="EnsemblPlants" id="AT2G45710.1">
    <property type="protein sequence ID" value="AT2G45710.1"/>
    <property type="gene ID" value="AT2G45710"/>
</dbReference>
<dbReference type="GeneID" id="819179"/>
<dbReference type="Gramene" id="AT2G45710.1">
    <property type="protein sequence ID" value="AT2G45710.1"/>
    <property type="gene ID" value="AT2G45710"/>
</dbReference>
<dbReference type="KEGG" id="ath:AT2G45710"/>
<dbReference type="Araport" id="AT2G45710"/>
<dbReference type="TAIR" id="AT2G45710"/>
<dbReference type="eggNOG" id="KOG1779">
    <property type="taxonomic scope" value="Eukaryota"/>
</dbReference>
<dbReference type="HOGENOM" id="CLU_130128_3_0_1"/>
<dbReference type="InParanoid" id="O64650"/>
<dbReference type="OMA" id="IRSCARI"/>
<dbReference type="OrthoDB" id="1074330at2759"/>
<dbReference type="PhylomeDB" id="O64650"/>
<dbReference type="CD-CODE" id="4299E36E">
    <property type="entry name" value="Nucleolus"/>
</dbReference>
<dbReference type="PRO" id="PR:O64650"/>
<dbReference type="Proteomes" id="UP000006548">
    <property type="component" value="Chromosome 2"/>
</dbReference>
<dbReference type="ExpressionAtlas" id="O64650">
    <property type="expression patterns" value="baseline and differential"/>
</dbReference>
<dbReference type="GO" id="GO:0022626">
    <property type="term" value="C:cytosolic ribosome"/>
    <property type="evidence" value="ECO:0007005"/>
    <property type="project" value="TAIR"/>
</dbReference>
<dbReference type="GO" id="GO:0022627">
    <property type="term" value="C:cytosolic small ribosomal subunit"/>
    <property type="evidence" value="ECO:0007005"/>
    <property type="project" value="TAIR"/>
</dbReference>
<dbReference type="GO" id="GO:0005730">
    <property type="term" value="C:nucleolus"/>
    <property type="evidence" value="ECO:0007005"/>
    <property type="project" value="TAIR"/>
</dbReference>
<dbReference type="GO" id="GO:0009506">
    <property type="term" value="C:plasmodesma"/>
    <property type="evidence" value="ECO:0007005"/>
    <property type="project" value="TAIR"/>
</dbReference>
<dbReference type="GO" id="GO:0003729">
    <property type="term" value="F:mRNA binding"/>
    <property type="evidence" value="ECO:0000314"/>
    <property type="project" value="TAIR"/>
</dbReference>
<dbReference type="GO" id="GO:0003735">
    <property type="term" value="F:structural constituent of ribosome"/>
    <property type="evidence" value="ECO:0000314"/>
    <property type="project" value="CAFA"/>
</dbReference>
<dbReference type="GO" id="GO:0008270">
    <property type="term" value="F:zinc ion binding"/>
    <property type="evidence" value="ECO:0007669"/>
    <property type="project" value="UniProtKB-KW"/>
</dbReference>
<dbReference type="GO" id="GO:0006412">
    <property type="term" value="P:translation"/>
    <property type="evidence" value="ECO:0007669"/>
    <property type="project" value="InterPro"/>
</dbReference>
<dbReference type="FunFam" id="2.20.25.100:FF:000001">
    <property type="entry name" value="40S ribosomal protein S27"/>
    <property type="match status" value="1"/>
</dbReference>
<dbReference type="Gene3D" id="2.20.25.100">
    <property type="entry name" value="Zn-binding ribosomal proteins"/>
    <property type="match status" value="1"/>
</dbReference>
<dbReference type="HAMAP" id="MF_00371">
    <property type="entry name" value="Ribosomal_eS27"/>
    <property type="match status" value="1"/>
</dbReference>
<dbReference type="InterPro" id="IPR000592">
    <property type="entry name" value="Ribosomal_eS27"/>
</dbReference>
<dbReference type="InterPro" id="IPR023407">
    <property type="entry name" value="Ribosomal_eS27_Zn-bd_dom_sf"/>
</dbReference>
<dbReference type="InterPro" id="IPR011332">
    <property type="entry name" value="Ribosomal_zn-bd"/>
</dbReference>
<dbReference type="PANTHER" id="PTHR11594">
    <property type="entry name" value="40S RIBOSOMAL PROTEIN S27"/>
    <property type="match status" value="1"/>
</dbReference>
<dbReference type="Pfam" id="PF01667">
    <property type="entry name" value="Ribosomal_S27e"/>
    <property type="match status" value="1"/>
</dbReference>
<dbReference type="SUPFAM" id="SSF57829">
    <property type="entry name" value="Zn-binding ribosomal proteins"/>
    <property type="match status" value="1"/>
</dbReference>
<dbReference type="PROSITE" id="PS01168">
    <property type="entry name" value="RIBOSOMAL_S27E"/>
    <property type="match status" value="1"/>
</dbReference>
<comment type="cofactor">
    <cofactor evidence="4">
        <name>Zn(2+)</name>
        <dbReference type="ChEBI" id="CHEBI:29105"/>
    </cofactor>
    <text evidence="4">Binds 1 zinc ion per subunit.</text>
</comment>
<comment type="subunit">
    <text evidence="2">(Microbial infection) May interact with Tomato yellow leaf curl virus (TYLCV) and papaya leaf curl China virus (PaLcuCNV) C2 proteins. This interaction prevents activation of Jasmonate signaling, thereby facilitating viral uptake by insects vectors.</text>
</comment>
<comment type="similarity">
    <text evidence="4">Belongs to the eukaryotic ribosomal protein eS27 family.</text>
</comment>
<organism>
    <name type="scientific">Arabidopsis thaliana</name>
    <name type="common">Mouse-ear cress</name>
    <dbReference type="NCBI Taxonomy" id="3702"/>
    <lineage>
        <taxon>Eukaryota</taxon>
        <taxon>Viridiplantae</taxon>
        <taxon>Streptophyta</taxon>
        <taxon>Embryophyta</taxon>
        <taxon>Tracheophyta</taxon>
        <taxon>Spermatophyta</taxon>
        <taxon>Magnoliopsida</taxon>
        <taxon>eudicotyledons</taxon>
        <taxon>Gunneridae</taxon>
        <taxon>Pentapetalae</taxon>
        <taxon>rosids</taxon>
        <taxon>malvids</taxon>
        <taxon>Brassicales</taxon>
        <taxon>Brassicaceae</taxon>
        <taxon>Camelineae</taxon>
        <taxon>Arabidopsis</taxon>
    </lineage>
</organism>
<evidence type="ECO:0000255" key="1"/>
<evidence type="ECO:0000269" key="2">
    <source>
    </source>
</evidence>
<evidence type="ECO:0000303" key="3">
    <source>
    </source>
</evidence>
<evidence type="ECO:0000305" key="4"/>
<gene>
    <name type="primary">RPS27A</name>
    <name type="synonym">ARS27C</name>
    <name type="ordered locus">At2g45710</name>
    <name type="ORF">F17K2.35</name>
    <name type="ORF">F4I18.31</name>
</gene>
<sequence length="84" mass="9405">MVLQNDIDLLNPPAELEKRKHKLKRLVQSPNSFFMDVKCQGCFNITTVFSHSQTVVMCGNCQTLLCTPTGGKAKLTEGCSFRKK</sequence>
<keyword id="KW-0945">Host-virus interaction</keyword>
<keyword id="KW-0479">Metal-binding</keyword>
<keyword id="KW-1185">Reference proteome</keyword>
<keyword id="KW-0687">Ribonucleoprotein</keyword>
<keyword id="KW-0689">Ribosomal protein</keyword>
<keyword id="KW-0862">Zinc</keyword>
<keyword id="KW-0863">Zinc-finger</keyword>
<reference key="1">
    <citation type="journal article" date="1999" name="Nature">
        <title>Sequence and analysis of chromosome 2 of the plant Arabidopsis thaliana.</title>
        <authorList>
            <person name="Lin X."/>
            <person name="Kaul S."/>
            <person name="Rounsley S.D."/>
            <person name="Shea T.P."/>
            <person name="Benito M.-I."/>
            <person name="Town C.D."/>
            <person name="Fujii C.Y."/>
            <person name="Mason T.M."/>
            <person name="Bowman C.L."/>
            <person name="Barnstead M.E."/>
            <person name="Feldblyum T.V."/>
            <person name="Buell C.R."/>
            <person name="Ketchum K.A."/>
            <person name="Lee J.J."/>
            <person name="Ronning C.M."/>
            <person name="Koo H.L."/>
            <person name="Moffat K.S."/>
            <person name="Cronin L.A."/>
            <person name="Shen M."/>
            <person name="Pai G."/>
            <person name="Van Aken S."/>
            <person name="Umayam L."/>
            <person name="Tallon L.J."/>
            <person name="Gill J.E."/>
            <person name="Adams M.D."/>
            <person name="Carrera A.J."/>
            <person name="Creasy T.H."/>
            <person name="Goodman H.M."/>
            <person name="Somerville C.R."/>
            <person name="Copenhaver G.P."/>
            <person name="Preuss D."/>
            <person name="Nierman W.C."/>
            <person name="White O."/>
            <person name="Eisen J.A."/>
            <person name="Salzberg S.L."/>
            <person name="Fraser C.M."/>
            <person name="Venter J.C."/>
        </authorList>
    </citation>
    <scope>NUCLEOTIDE SEQUENCE [LARGE SCALE GENOMIC DNA]</scope>
    <source>
        <strain>cv. Columbia</strain>
    </source>
</reference>
<reference key="2">
    <citation type="journal article" date="2017" name="Plant J.">
        <title>Araport11: a complete reannotation of the Arabidopsis thaliana reference genome.</title>
        <authorList>
            <person name="Cheng C.Y."/>
            <person name="Krishnakumar V."/>
            <person name="Chan A.P."/>
            <person name="Thibaud-Nissen F."/>
            <person name="Schobel S."/>
            <person name="Town C.D."/>
        </authorList>
    </citation>
    <scope>GENOME REANNOTATION</scope>
    <source>
        <strain>cv. Columbia</strain>
    </source>
</reference>
<reference key="3">
    <citation type="journal article" date="2003" name="Science">
        <title>Empirical analysis of transcriptional activity in the Arabidopsis genome.</title>
        <authorList>
            <person name="Yamada K."/>
            <person name="Lim J."/>
            <person name="Dale J.M."/>
            <person name="Chen H."/>
            <person name="Shinn P."/>
            <person name="Palm C.J."/>
            <person name="Southwick A.M."/>
            <person name="Wu H.C."/>
            <person name="Kim C.J."/>
            <person name="Nguyen M."/>
            <person name="Pham P.K."/>
            <person name="Cheuk R.F."/>
            <person name="Karlin-Newmann G."/>
            <person name="Liu S.X."/>
            <person name="Lam B."/>
            <person name="Sakano H."/>
            <person name="Wu T."/>
            <person name="Yu G."/>
            <person name="Miranda M."/>
            <person name="Quach H.L."/>
            <person name="Tripp M."/>
            <person name="Chang C.H."/>
            <person name="Lee J.M."/>
            <person name="Toriumi M.J."/>
            <person name="Chan M.M."/>
            <person name="Tang C.C."/>
            <person name="Onodera C.S."/>
            <person name="Deng J.M."/>
            <person name="Akiyama K."/>
            <person name="Ansari Y."/>
            <person name="Arakawa T."/>
            <person name="Banh J."/>
            <person name="Banno F."/>
            <person name="Bowser L."/>
            <person name="Brooks S.Y."/>
            <person name="Carninci P."/>
            <person name="Chao Q."/>
            <person name="Choy N."/>
            <person name="Enju A."/>
            <person name="Goldsmith A.D."/>
            <person name="Gurjal M."/>
            <person name="Hansen N.F."/>
            <person name="Hayashizaki Y."/>
            <person name="Johnson-Hopson C."/>
            <person name="Hsuan V.W."/>
            <person name="Iida K."/>
            <person name="Karnes M."/>
            <person name="Khan S."/>
            <person name="Koesema E."/>
            <person name="Ishida J."/>
            <person name="Jiang P.X."/>
            <person name="Jones T."/>
            <person name="Kawai J."/>
            <person name="Kamiya A."/>
            <person name="Meyers C."/>
            <person name="Nakajima M."/>
            <person name="Narusaka M."/>
            <person name="Seki M."/>
            <person name="Sakurai T."/>
            <person name="Satou M."/>
            <person name="Tamse R."/>
            <person name="Vaysberg M."/>
            <person name="Wallender E.K."/>
            <person name="Wong C."/>
            <person name="Yamamura Y."/>
            <person name="Yuan S."/>
            <person name="Shinozaki K."/>
            <person name="Davis R.W."/>
            <person name="Theologis A."/>
            <person name="Ecker J.R."/>
        </authorList>
    </citation>
    <scope>NUCLEOTIDE SEQUENCE [LARGE SCALE MRNA]</scope>
    <source>
        <strain>cv. Columbia</strain>
    </source>
</reference>
<reference key="4">
    <citation type="submission" date="2002-03" db="EMBL/GenBank/DDBJ databases">
        <title>Full-length cDNA from Arabidopsis thaliana.</title>
        <authorList>
            <person name="Brover V.V."/>
            <person name="Troukhan M.E."/>
            <person name="Alexandrov N.A."/>
            <person name="Lu Y.-P."/>
            <person name="Flavell R.B."/>
            <person name="Feldmann K.A."/>
        </authorList>
    </citation>
    <scope>NUCLEOTIDE SEQUENCE [LARGE SCALE MRNA]</scope>
</reference>
<reference key="5">
    <citation type="journal article" date="1999" name="EMBO J.">
        <title>Involvement of Arabidopsis thaliana ribosomal protein S27 in mRNA degradation triggered by genotoxic stress.</title>
        <authorList>
            <person name="Revenkova E."/>
            <person name="Masson J."/>
            <person name="Koncz C."/>
            <person name="Afsar K."/>
            <person name="Jakovleva L."/>
            <person name="Paszkowski J."/>
        </authorList>
    </citation>
    <scope>IDENTIFICATION</scope>
</reference>
<reference key="6">
    <citation type="journal article" date="2001" name="Plant Physiol.">
        <title>The organization of cytoplasmic ribosomal protein genes in the Arabidopsis genome.</title>
        <authorList>
            <person name="Barakat A."/>
            <person name="Szick-Miranda K."/>
            <person name="Chang I.-F."/>
            <person name="Guyot R."/>
            <person name="Blanc G."/>
            <person name="Cooke R."/>
            <person name="Delseny M."/>
            <person name="Bailey-Serres J."/>
        </authorList>
    </citation>
    <scope>GENE FAMILY ORGANIZATION</scope>
    <scope>NOMENCLATURE</scope>
</reference>
<reference key="7">
    <citation type="journal article" date="2023" name="Plant Cell">
        <title>An updated nomenclature for plant ribosomal protein genes.</title>
        <authorList>
            <person name="Scarpin M.R."/>
            <person name="Busche M."/>
            <person name="Martinez R.E."/>
            <person name="Harper L.C."/>
            <person name="Reiser L."/>
            <person name="Szakonyi D."/>
            <person name="Merchante C."/>
            <person name="Lan T."/>
            <person name="Xiong W."/>
            <person name="Mo B."/>
            <person name="Tang G."/>
            <person name="Chen X."/>
            <person name="Bailey-Serres J."/>
            <person name="Browning K.S."/>
            <person name="Brunkard J.O."/>
        </authorList>
    </citation>
    <scope>NOMENCLATURE</scope>
</reference>
<reference key="8">
    <citation type="journal article" date="2019" name="PLoS Pathog.">
        <title>Plant begomoviruses subvert ubiquitination to suppress plant defenses against insect vectors.</title>
        <authorList>
            <person name="Li P."/>
            <person name="Liu C."/>
            <person name="Deng W.H."/>
            <person name="Yao D.M."/>
            <person name="Pan L.L."/>
            <person name="Li Y.Q."/>
            <person name="Liu Y.Q."/>
            <person name="Liang Y."/>
            <person name="Zhou X.P."/>
            <person name="Wang X.W."/>
        </authorList>
    </citation>
    <scope>INTERACTION WITH TOMATO YELLOW LEAF CURL VIRUS C2 (MICROBIAL INFECTION)</scope>
    <scope>INTERACTION WITH PAPAYA LEAF CURL CHINA VIRUS C2 (MICROBIAL INFECTION)</scope>
</reference>
<feature type="chain" id="PRO_0000149059" description="Small ribosomal subunit protein eS27z">
    <location>
        <begin position="1"/>
        <end position="84"/>
    </location>
</feature>
<feature type="zinc finger region" description="C4-type" evidence="1">
    <location>
        <begin position="39"/>
        <end position="61"/>
    </location>
</feature>
<protein>
    <recommendedName>
        <fullName evidence="3">Small ribosomal subunit protein eS27z</fullName>
    </recommendedName>
    <alternativeName>
        <fullName>40S ribosomal protein S27-1</fullName>
    </alternativeName>
</protein>
<proteinExistence type="evidence at protein level"/>